<organism>
    <name type="scientific">Enterobacteria phage I2-2</name>
    <name type="common">Bacteriophage I2-2</name>
    <dbReference type="NCBI Taxonomy" id="10869"/>
    <lineage>
        <taxon>Viruses</taxon>
        <taxon>Monodnaviria</taxon>
        <taxon>Loebvirae</taxon>
        <taxon>Hofneiviricota</taxon>
        <taxon>Faserviricetes</taxon>
        <taxon>Tubulavirales</taxon>
        <taxon>Inoviridae</taxon>
        <taxon>Lineavirus</taxon>
    </lineage>
</organism>
<reference key="1">
    <citation type="journal article" date="1992" name="J. Mol. Evol.">
        <title>Nucleotide sequence of the genome of the filamentous bacteriophage I2-2: module evolution of the filamentous phage genome.</title>
        <authorList>
            <person name="Stassen A.P."/>
            <person name="Schonmakers E.F."/>
            <person name="Yu M."/>
            <person name="Schoenmakers J.G."/>
            <person name="Konings R.N.H."/>
        </authorList>
    </citation>
    <scope>NUCLEOTIDE SEQUENCE [GENOMIC DNA]</scope>
</reference>
<accession>P15417</accession>
<evidence type="ECO:0000250" key="1"/>
<evidence type="ECO:0000305" key="2"/>
<organismHost>
    <name type="scientific">Escherichia coli</name>
    <dbReference type="NCBI Taxonomy" id="562"/>
</organismHost>
<gene>
    <name type="primary">V</name>
</gene>
<comment type="function">
    <text evidence="1">Binds to DNA in a highly cooperative manner without pronounced sequence specificity. During synthesis of the single-stranded (progeny) viral DNA, prevents the conversion into the double-stranded replicative form. G5P is displaced by the capsid protein G8P during phage assembly on the inner bacterial membrane (By similarity).</text>
</comment>
<comment type="subunit">
    <text evidence="1">Homodimer.</text>
</comment>
<comment type="similarity">
    <text evidence="2">Belongs to the inovirus G5P protein family.</text>
</comment>
<sequence>MHSGILIRGRILGSRTANRDNNSPQHILGVGIQKADGFGGTTQDVEQVKIPDQLVQSGVVNQINSLIGKLCEVPINVRSWSMNGKNGTSYTLSFESGIQEIEELIYVR</sequence>
<keyword id="KW-0235">DNA replication</keyword>
<keyword id="KW-0238">DNA-binding</keyword>
<keyword id="KW-1185">Reference proteome</keyword>
<proteinExistence type="inferred from homology"/>
<name>G5P_BPI22</name>
<feature type="chain" id="PRO_0000098197" description="DNA-Binding protein G5P">
    <location>
        <begin position="1"/>
        <end position="108"/>
    </location>
</feature>
<protein>
    <recommendedName>
        <fullName>DNA-Binding protein G5P</fullName>
        <shortName>G5P</shortName>
    </recommendedName>
    <alternativeName>
        <fullName>Single-stranded DNA-binding protein</fullName>
    </alternativeName>
</protein>
<dbReference type="EMBL" id="X14336">
    <property type="protein sequence ID" value="CAA32514.1"/>
    <property type="molecule type" value="Genomic_DNA"/>
</dbReference>
<dbReference type="PIR" id="S08087">
    <property type="entry name" value="S08087"/>
</dbReference>
<dbReference type="RefSeq" id="NP_039617.1">
    <property type="nucleotide sequence ID" value="NC_001332.1"/>
</dbReference>
<dbReference type="KEGG" id="vg:1260719"/>
<dbReference type="Proteomes" id="UP000000373">
    <property type="component" value="Genome"/>
</dbReference>
<dbReference type="GO" id="GO:0003677">
    <property type="term" value="F:DNA binding"/>
    <property type="evidence" value="ECO:0007669"/>
    <property type="project" value="UniProtKB-KW"/>
</dbReference>
<dbReference type="GO" id="GO:0006260">
    <property type="term" value="P:DNA replication"/>
    <property type="evidence" value="ECO:0007669"/>
    <property type="project" value="UniProtKB-KW"/>
</dbReference>
<dbReference type="InterPro" id="IPR035411">
    <property type="entry name" value="Putative_G5P"/>
</dbReference>
<dbReference type="Pfam" id="PF17426">
    <property type="entry name" value="Putative_G5P"/>
    <property type="match status" value="1"/>
</dbReference>